<protein>
    <recommendedName>
        <fullName>Genome polyprotein</fullName>
    </recommendedName>
    <component>
        <recommendedName>
            <fullName>P1</fullName>
        </recommendedName>
    </component>
    <component>
        <recommendedName>
            <fullName>Capsid protein VP0</fullName>
        </recommendedName>
        <alternativeName>
            <fullName>VP4-VP2</fullName>
        </alternativeName>
    </component>
    <component>
        <recommendedName>
            <fullName>Capsid protein VP4</fullName>
        </recommendedName>
        <alternativeName>
            <fullName>P1A</fullName>
        </alternativeName>
        <alternativeName>
            <fullName>Virion protein 4</fullName>
        </alternativeName>
    </component>
    <component>
        <recommendedName>
            <fullName>Capsid protein VP2</fullName>
        </recommendedName>
        <alternativeName>
            <fullName>P1B</fullName>
        </alternativeName>
        <alternativeName>
            <fullName>Virion protein 2</fullName>
        </alternativeName>
    </component>
    <component>
        <recommendedName>
            <fullName>Capsid protein VP3</fullName>
        </recommendedName>
        <alternativeName>
            <fullName>P1C</fullName>
        </alternativeName>
        <alternativeName>
            <fullName>Virion protein 3</fullName>
        </alternativeName>
    </component>
    <component>
        <recommendedName>
            <fullName>Capsid protein VP1</fullName>
        </recommendedName>
        <alternativeName>
            <fullName>P1D</fullName>
        </alternativeName>
        <alternativeName>
            <fullName>Virion protein 1</fullName>
        </alternativeName>
    </component>
    <component>
        <recommendedName>
            <fullName>P2</fullName>
        </recommendedName>
    </component>
    <component>
        <recommendedName>
            <fullName>Protease 2A</fullName>
            <shortName>P2A</shortName>
            <ecNumber evidence="2">3.4.22.29</ecNumber>
        </recommendedName>
        <alternativeName>
            <fullName>Picornain 2A</fullName>
        </alternativeName>
        <alternativeName>
            <fullName>Protein 2A</fullName>
        </alternativeName>
    </component>
    <component>
        <recommendedName>
            <fullName>Protein 2B</fullName>
            <shortName>P2B</shortName>
        </recommendedName>
    </component>
    <component>
        <recommendedName>
            <fullName>Protein 2C</fullName>
            <shortName>P2C</shortName>
            <ecNumber evidence="2">3.6.1.15</ecNumber>
        </recommendedName>
    </component>
    <component>
        <recommendedName>
            <fullName>P3</fullName>
        </recommendedName>
    </component>
    <component>
        <recommendedName>
            <fullName>Protein 3AB</fullName>
        </recommendedName>
    </component>
    <component>
        <recommendedName>
            <fullName>Protein 3A</fullName>
            <shortName>P3A</shortName>
        </recommendedName>
    </component>
    <component>
        <recommendedName>
            <fullName>Viral protein genome-linked</fullName>
            <shortName>VPg</shortName>
        </recommendedName>
        <alternativeName>
            <fullName>Protein 3B</fullName>
            <shortName>P3B</shortName>
        </alternativeName>
    </component>
    <component>
        <recommendedName>
            <fullName>Protein 3CD</fullName>
            <ecNumber>3.4.22.28</ecNumber>
        </recommendedName>
    </component>
    <component>
        <recommendedName>
            <fullName evidence="11">Protease 3C</fullName>
            <ecNumber evidence="11">3.4.22.28</ecNumber>
        </recommendedName>
        <alternativeName>
            <fullName evidence="11">Picornain 3C</fullName>
            <shortName evidence="11">P3C</shortName>
        </alternativeName>
    </component>
    <component>
        <recommendedName>
            <fullName evidence="9">RNA-directed RNA polymerase</fullName>
            <shortName>RdRp</shortName>
            <ecNumber evidence="9">2.7.7.48</ecNumber>
        </recommendedName>
        <alternativeName>
            <fullName>3D polymerase</fullName>
            <shortName>3Dpol</shortName>
        </alternativeName>
        <alternativeName>
            <fullName>Protein 3D</fullName>
            <shortName>3D</shortName>
        </alternativeName>
    </component>
</protein>
<keyword id="KW-0002">3D-structure</keyword>
<keyword id="KW-1072">Activation of host autophagy by virus</keyword>
<keyword id="KW-0067">ATP-binding</keyword>
<keyword id="KW-0167">Capsid protein</keyword>
<keyword id="KW-0191">Covalent protein-RNA linkage</keyword>
<keyword id="KW-0235">DNA replication</keyword>
<keyword id="KW-1262">Eukaryotic host gene expression shutoff by virus</keyword>
<keyword id="KW-1193">Eukaryotic host translation shutoff by virus</keyword>
<keyword id="KW-0347">Helicase</keyword>
<keyword id="KW-1035">Host cytoplasm</keyword>
<keyword id="KW-1036">Host cytoplasmic vesicle</keyword>
<keyword id="KW-1190">Host gene expression shutoff by virus</keyword>
<keyword id="KW-1043">Host membrane</keyword>
<keyword id="KW-1192">Host mRNA suppression by virus</keyword>
<keyword id="KW-1048">Host nucleus</keyword>
<keyword id="KW-0945">Host-virus interaction</keyword>
<keyword id="KW-0378">Hydrolase</keyword>
<keyword id="KW-1090">Inhibition of host innate immune response by virus</keyword>
<keyword id="KW-1099">Inhibition of host mRNA nuclear export by virus</keyword>
<keyword id="KW-1088">Inhibition of host RIG-I by virus</keyword>
<keyword id="KW-1113">Inhibition of host RLR pathway by virus</keyword>
<keyword id="KW-0407">Ion channel</keyword>
<keyword id="KW-0406">Ion transport</keyword>
<keyword id="KW-0449">Lipoprotein</keyword>
<keyword id="KW-0460">Magnesium</keyword>
<keyword id="KW-0472">Membrane</keyword>
<keyword id="KW-0479">Metal-binding</keyword>
<keyword id="KW-0519">Myristate</keyword>
<keyword id="KW-0547">Nucleotide-binding</keyword>
<keyword id="KW-0548">Nucleotidyltransferase</keyword>
<keyword id="KW-0597">Phosphoprotein</keyword>
<keyword id="KW-1172">Pore-mediated penetration of viral genome into host cell</keyword>
<keyword id="KW-0645">Protease</keyword>
<keyword id="KW-0677">Repeat</keyword>
<keyword id="KW-0694">RNA-binding</keyword>
<keyword id="KW-0696">RNA-directed RNA polymerase</keyword>
<keyword id="KW-1143">T=pseudo3 icosahedral capsid protein</keyword>
<keyword id="KW-0788">Thiol protease</keyword>
<keyword id="KW-0808">Transferase</keyword>
<keyword id="KW-0813">Transport</keyword>
<keyword id="KW-1161">Viral attachment to host cell</keyword>
<keyword id="KW-0899">Viral immunoevasion</keyword>
<keyword id="KW-1182">Viral ion channel</keyword>
<keyword id="KW-1162">Viral penetration into host cytoplasm</keyword>
<keyword id="KW-0693">Viral RNA replication</keyword>
<keyword id="KW-0946">Virion</keyword>
<keyword id="KW-1164">Virus endocytosis by host</keyword>
<keyword id="KW-1160">Virus entry into host cell</keyword>
<keyword id="KW-0862">Zinc</keyword>
<keyword id="KW-0863">Zinc-finger</keyword>
<organismHost>
    <name type="scientific">Homo sapiens</name>
    <name type="common">Human</name>
    <dbReference type="NCBI Taxonomy" id="9606"/>
</organismHost>
<proteinExistence type="evidence at protein level"/>
<comment type="function">
    <molecule>Capsid protein VP1</molecule>
    <text evidence="2 13 15">Forms an icosahedral capsid of pseudo T=3 symmetry with capsid proteins VP2 and VP3 (PubMed:27511920, PubMed:32152109). The capsid is 300 Angstroms in diameter, composed of 60 copies of each capsid protein and enclosing the viral positive strand RNA genome (PubMed:27511920, PubMed:32152109). Capsid protein VP1 mainly forms the vertices of the capsid (PubMed:27511920, PubMed:32152109). The VP1 C-termini form 60 dominant spike-like protrusions on the surface of the virion (PubMed:27511920). Capsid protein VP1 interacts with host cell receptor CDHR3 to provide virion attachment to target host cells (PubMed:32152109). This attachment induces virion internalization (PubMed:32152109). Tyrosine kinases are probably involved in the entry process (By similarity). After binding to its receptor, the capsid undergoes conformational changes (By similarity). Capsid protein VP1 N-terminus (that contains an amphipathic alpha-helix) and capsid protein VP4 are externalized (By similarity). Together, they shape a pore in the host membrane through which viral genome is translocated to host cell cytoplasm (By similarity).</text>
</comment>
<comment type="function">
    <molecule>Capsid protein VP2</molecule>
    <text evidence="13 15">Forms an icosahedral capsid of pseudo T=3 symmetry with capsid proteins VP2 and VP3 (PubMed:27511920, PubMed:32152109). The capsid is 300 Angstroms in diameter, composed of 60 copies of each capsid protein and enclosing the viral positive strand RNA genome (PubMed:27511920, PubMed:32152109).</text>
</comment>
<comment type="function">
    <molecule>Capsid protein VP3</molecule>
    <text evidence="13 15">Forms an icosahedral capsid of pseudo T=3 symmetry with capsid proteins VP2 and VP3 (PubMed:27511920, PubMed:32152109). The capsid is 300 Angstroms in diameter, composed of 60 copies of each capsid protein and enclosing the viral positive strand RNA genome (PubMed:27511920, PubMed:32152109).</text>
</comment>
<comment type="function">
    <molecule>Capsid protein VP4</molecule>
    <text evidence="2 15">Lies on the inner surface of the capsid shell (PubMed:32152109). After binding to the host receptor, the capsid undergoes conformational changes (By similarity). Capsid protein VP4 is released, Capsid protein VP1 N-terminus is externalized, and together, they shape a pore in the host membrane through which the viral genome is translocated into the host cell cytoplasm (By similarity).</text>
</comment>
<comment type="function">
    <molecule>Capsid protein VP0</molecule>
    <text evidence="2">Component of immature procapsids, which is cleaved into capsid proteins VP4 and VP2 after maturation (By similarity). Allows the capsid to remain inactive before the maturation step (By similarity).</text>
</comment>
<comment type="function">
    <molecule>Protease 2A</molecule>
    <text evidence="2 3 5">Cysteine protease that cleaves viral polyprotein and specific host proteins (By similarity). It is responsible for the autocatalytic cleavage between the P1 and P2 regions, which is the first cleavage occurring in the polyprotein (By similarity). Also cleaves the host translation initiation factor EIF4G1, in order to shut down the capped cellular mRNA translation (By similarity). Inhibits the host nucleus-cytoplasm protein and RNA trafficking by cleaving host members of the nuclear pores (By similarity). Counteracts stress granule formation probably by antagonizing its assembly or promoting its dissassembly (By similarity).</text>
</comment>
<comment type="function">
    <molecule>Protein 2B</molecule>
    <text evidence="2">Plays an essential role in the virus replication cycle by acting as a viroporin. Creates a pore in the host endoplasmic reticulum and as a consequence releases Ca2+ in the cytoplasm of infected cell. In turn, high levels of cytoplasmic calcium may trigger membrane trafficking and transport of viral ER-associated proteins to viroplasms, sites of viral genome replication.</text>
</comment>
<comment type="function">
    <molecule>Protein 2C</molecule>
    <text evidence="2">Induces and associates with structural rearrangements of intracellular membranes. Displays RNA-binding, nucleotide binding and NTPase activities. May play a role in virion morphogenesis and viral RNA encapsidation by interacting with the capsid protein VP3.</text>
</comment>
<comment type="function">
    <molecule>Protein 3AB</molecule>
    <text evidence="2">Localizes the viral replication complex to the surface of membranous vesicles. Together with protein 3CD binds the Cis-Active RNA Element (CRE) which is involved in RNA synthesis initiation. Acts as a cofactor to stimulate the activity of 3D polymerase, maybe through a nucleid acid chaperone activity.</text>
</comment>
<comment type="function">
    <molecule>Protein 3A</molecule>
    <text evidence="2 5">Localizes the viral replication complex to the surface of membranous vesicles (By similarity). It inhibits host cell endoplasmic reticulum-to-Golgi apparatus transport and causes the disassembly of the Golgi complex, possibly through GBF1 interaction (By similarity). This would result in depletion of MHC, trail receptors and IFN receptors at the host cell surface (By similarity). Plays an essential role in viral RNA replication by recruiting ACBD3 and PI4KB at the viral replication sites, thereby allowing the formation of the rearranged membranous structures where viral replication takes place (By similarity).</text>
</comment>
<comment type="function">
    <molecule>Viral protein genome-linked</molecule>
    <text evidence="2">Acts as a primer for viral RNA replication and remains covalently bound to viral genomic RNA. VPg is uridylylated prior to priming replication into VPg-pUpU. The oriI viral genomic sequence may act as a template for this. The VPg-pUpU is then used as primer on the genomic RNA poly(A) by the RNA-dependent RNA polymerase to replicate the viral genome. During genome replication, the VPg-RNA linkage is removed by the host TDP2, thereby accelerating replication. During the late stage of the replication cycle, host TDP2 is excluded from sites of viral RNA synthesis and encapsidation, allowing for the generation of progeny virions.</text>
</comment>
<comment type="function">
    <molecule>Protein 3CD</molecule>
    <text evidence="2">Involved in the viral replication complex and viral polypeptide maturation. It exhibits protease activity with a specificity and catalytic efficiency that is different from protease 3C. Protein 3CD lacks polymerase activity. Protein 3CD binds to the 5'UTR of the viral genome.</text>
</comment>
<comment type="function">
    <molecule>Protease 3C</molecule>
    <text evidence="2 4">Major viral protease that mediates proteolytic processing of the polyprotein (By similarity). Cleaves host EIF5B, contributing to host translation shutoff (By similarity). Also cleaves host PABPC1, contributing to host translation shutoff (By similarity).</text>
</comment>
<comment type="function">
    <molecule>RNA-directed RNA polymerase</molecule>
    <text evidence="2">Replicates the viral genomic RNA on the surface of intracellular membranes. May form linear arrays of subunits that propagate along a strong head-to-tail interaction called interface-I. Covalently attaches UMP to a tyrosine of VPg, which is used to prime RNA synthesis. The positive stranded RNA genome is first replicated at virus induced membranous vesicles, creating a dsRNA genomic replication form. This dsRNA is then used as template to synthesize positive stranded RNA genomes. ss(+)RNA genomes are either translated, replicated or encapsidated.</text>
</comment>
<comment type="catalytic activity">
    <molecule>Protein 2C</molecule>
    <reaction evidence="2">
        <text>a ribonucleoside 5'-triphosphate + H2O = a ribonucleoside 5'-diphosphate + phosphate + H(+)</text>
        <dbReference type="Rhea" id="RHEA:23680"/>
        <dbReference type="ChEBI" id="CHEBI:15377"/>
        <dbReference type="ChEBI" id="CHEBI:15378"/>
        <dbReference type="ChEBI" id="CHEBI:43474"/>
        <dbReference type="ChEBI" id="CHEBI:57930"/>
        <dbReference type="ChEBI" id="CHEBI:61557"/>
        <dbReference type="EC" id="3.6.1.15"/>
    </reaction>
</comment>
<comment type="catalytic activity">
    <molecule>Protease 3C</molecule>
    <reaction evidence="11">
        <text>Selective cleavage of Gln-|-Gly bond in the poliovirus polyprotein. In other picornavirus reactions Glu may be substituted for Gln, and Ser or Thr for Gly.</text>
        <dbReference type="EC" id="3.4.22.28"/>
    </reaction>
</comment>
<comment type="catalytic activity">
    <molecule>Protease 2A</molecule>
    <reaction evidence="2">
        <text>Selective cleavage of Tyr-|-Gly bond in the picornavirus polyprotein.</text>
        <dbReference type="EC" id="3.4.22.29"/>
    </reaction>
</comment>
<comment type="catalytic activity">
    <molecule>RNA-directed RNA polymerase</molecule>
    <reaction evidence="9">
        <text>RNA(n) + a ribonucleoside 5'-triphosphate = RNA(n+1) + diphosphate</text>
        <dbReference type="Rhea" id="RHEA:21248"/>
        <dbReference type="Rhea" id="RHEA-COMP:14527"/>
        <dbReference type="Rhea" id="RHEA-COMP:17342"/>
        <dbReference type="ChEBI" id="CHEBI:33019"/>
        <dbReference type="ChEBI" id="CHEBI:61557"/>
        <dbReference type="ChEBI" id="CHEBI:140395"/>
        <dbReference type="EC" id="2.7.7.48"/>
    </reaction>
</comment>
<comment type="cofactor">
    <molecule>RNA-directed RNA polymerase</molecule>
    <cofactor evidence="2">
        <name>Mg(2+)</name>
        <dbReference type="ChEBI" id="CHEBI:18420"/>
    </cofactor>
    <text evidence="2 4">Binds 2 magnesium ions that constitute a dinuclear catalytic metal center (By similarity). The magnesium ions are not prebound but only present for catalysis (By similarity). Requires the presence of 3CDpro or 3CPro (By similarity).</text>
</comment>
<comment type="activity regulation">
    <molecule>RNA-directed RNA polymerase</molecule>
    <text evidence="2">Replication or transcription is subject to high level of random mutations by the nucleotide analog ribavirin.</text>
</comment>
<comment type="subunit">
    <molecule>Capsid protein VP0</molecule>
    <text evidence="13">Interacts with capsid protein VP1 and capsid protein VP3 to form heterotrimeric protomers.</text>
</comment>
<comment type="subunit">
    <molecule>Capsid protein VP1</molecule>
    <text evidence="13 15">Interacts with capsid protein VP0, and capsid protein VP3 to form heterotrimeric protomers (PubMed:27511920). Five protomers subsequently associate to form pentamers which serve as building blocks for the capsid (PubMed:27511920). Interacts with capsid protein VP2, capsid protein VP3 and capsid protein VP4 following cleavage of capsid protein VP0 (PubMed:27511920). Interacts (via C-terminus) with capsid protein VP4 (via C-terminus) (PubMed:27511920). Interacts with host CDHR3 (via N-terminus); this interaction occurs near each threefold vertex of the capsid and allows the virus attachment and entry into the host cell (PubMed:32152109).</text>
</comment>
<comment type="subunit">
    <molecule>Capsid protein VP2</molecule>
    <text evidence="13 15">Interacts with capsid protein VP1 and capsid protein VP3 in the mature capsid (PubMed:27511920). Interacts with host CDHR3 (via N-terminus); this interaction occurs near each threefold vertex of the capsid and allows the virus attachment and entry into the host cell (PubMed:32152109).</text>
</comment>
<comment type="subunit">
    <molecule>Capsid protein VP3</molecule>
    <text evidence="2 13 15">Interacts with capsid protein VP0 and capsid protein VP1 to form heterotrimeric protomers (PubMed:27511920). Five protomers subsequently associate to form pentamers which serve as building blocks for the capsid (PubMed:27511920). Interacts with capsid protein VP4 in the mature capsid (PubMed:27511920). Interacts with protein 2C; this interaction may be important for virion morphogenesis (By similarity). Interacts with host CDHR3 (via N-terminus); this interaction occurs near each threefold vertex of the capsid and allows the virus attachment and entry into the host cell (PubMed:32152109).</text>
</comment>
<comment type="subunit">
    <molecule>Capsid protein VP4</molecule>
    <text evidence="13">Interacts (via C-terminus) with capsid protein VP1 (via C-terminus) (PubMed:27511920). Interacts with capsid protein VP3 (PubMed:27511920).</text>
</comment>
<comment type="subunit">
    <molecule>Protease 2A</molecule>
    <text evidence="5">Homodimer.</text>
</comment>
<comment type="subunit">
    <molecule>Protein 2C</molecule>
    <text evidence="2">Homohexamer; forms a hexameric ring structure with 6-fold symmetry characteristic of AAA+ ATPases (By similarity). Interacts (via N-terminus) with host RTN3 (via reticulon domain); this interaction is important for viral replication (By similarity). Interacts with capsid protein VP3; this interaction may be important for virion morphogenesis (By similarity).</text>
</comment>
<comment type="subunit">
    <molecule>Protein 3AB</molecule>
    <text evidence="2">Interacts with protein 3CD.</text>
</comment>
<comment type="subunit">
    <molecule>Protein 3A</molecule>
    <text evidence="2">Homodimer (By similarity). Interacts with host GBF1 (By similarity). Interacts (via GOLD domain) with host ACBD3 (via GOLD domain); this interaction allows the formation of a viral protein 3A/ACBD3 heterotetramer with a 2:2 stoichiometry, which will stimulate the recruitment of host PI4KB in order to synthesize PI4P at the viral RNA replication sites (By similarity).</text>
</comment>
<comment type="subunit">
    <molecule>Viral protein genome-linked</molecule>
    <text evidence="2">Interacts with RNA-directed RNA polymerase.</text>
</comment>
<comment type="subunit">
    <molecule>Protein 3CD</molecule>
    <text evidence="2">Interacts with protein 3AB and with RNA-directed RNA polymerase.</text>
</comment>
<comment type="subunit">
    <molecule>RNA-directed RNA polymerase</molecule>
    <text evidence="2">Interacts with Viral protein genome-linked and with protein 3CD.</text>
</comment>
<comment type="subcellular location">
    <molecule>Capsid protein VP0</molecule>
    <subcellularLocation>
        <location evidence="13">Virion</location>
    </subcellularLocation>
    <subcellularLocation>
        <location evidence="6">Host cytoplasm</location>
    </subcellularLocation>
</comment>
<comment type="subcellular location">
    <molecule>Capsid protein VP4</molecule>
    <subcellularLocation>
        <location evidence="13">Virion</location>
    </subcellularLocation>
    <text evidence="16">The internal surface of the capsid is lined by the 60 copies of VP4.</text>
</comment>
<comment type="subcellular location">
    <molecule>Capsid protein VP2</molecule>
    <subcellularLocation>
        <location evidence="13">Virion</location>
    </subcellularLocation>
    <subcellularLocation>
        <location evidence="6">Host cytoplasm</location>
    </subcellularLocation>
</comment>
<comment type="subcellular location">
    <molecule>Capsid protein VP3</molecule>
    <subcellularLocation>
        <location evidence="13">Virion</location>
    </subcellularLocation>
    <subcellularLocation>
        <location evidence="6">Host cytoplasm</location>
    </subcellularLocation>
</comment>
<comment type="subcellular location">
    <molecule>Capsid protein VP1</molecule>
    <subcellularLocation>
        <location evidence="13">Virion</location>
    </subcellularLocation>
    <subcellularLocation>
        <location evidence="6">Host cytoplasm</location>
    </subcellularLocation>
</comment>
<comment type="subcellular location">
    <molecule>Protein 2B</molecule>
    <subcellularLocation>
        <location evidence="6">Host cytoplasmic vesicle membrane</location>
        <topology evidence="6">Peripheral membrane protein</topology>
        <orientation evidence="6">Cytoplasmic side</orientation>
    </subcellularLocation>
    <text evidence="6">Probably localizes to the surface of intracellular membrane vesicles that are induced after virus infection as the site for viral RNA replication. These vesicles are derived from the endoplasmic reticulum.</text>
</comment>
<comment type="subcellular location">
    <molecule>Protein 2C</molecule>
    <subcellularLocation>
        <location evidence="6">Host cytoplasmic vesicle membrane</location>
        <topology evidence="6">Peripheral membrane protein</topology>
        <orientation evidence="6">Cytoplasmic side</orientation>
    </subcellularLocation>
    <text evidence="6">Probably localizes to the surface of intracellular membrane vesicles that are induced after virus infection as the site for viral RNA replication. These vesicles are derived from the endoplasmic reticulum.</text>
</comment>
<comment type="subcellular location">
    <molecule>Protein 3A</molecule>
    <subcellularLocation>
        <location evidence="6">Host cytoplasmic vesicle membrane</location>
        <topology evidence="6">Peripheral membrane protein</topology>
        <orientation evidence="6">Cytoplasmic side</orientation>
    </subcellularLocation>
    <text evidence="6">Probably localizes to the surface of intracellular membrane vesicles that are induced after virus infection as the site for viral RNA replication. These vesicles are derived from the endoplasmic reticulum.</text>
</comment>
<comment type="subcellular location">
    <molecule>Protein 3AB</molecule>
    <subcellularLocation>
        <location evidence="6">Host cytoplasmic vesicle membrane</location>
        <topology evidence="6">Peripheral membrane protein</topology>
        <orientation evidence="6">Cytoplasmic side</orientation>
    </subcellularLocation>
    <text evidence="6">Probably localizes to the surface of intracellular membrane vesicles that are induced after virus infection as the site for viral RNA replication. These vesicles are derived from the endoplasmic reticulum.</text>
</comment>
<comment type="subcellular location">
    <molecule>Viral protein genome-linked</molecule>
    <subcellularLocation>
        <location evidence="2">Virion</location>
    </subcellularLocation>
    <subcellularLocation>
        <location evidence="7">Host cytoplasm</location>
    </subcellularLocation>
</comment>
<comment type="subcellular location">
    <molecule>Protease 3C</molecule>
    <subcellularLocation>
        <location evidence="6">Host cytoplasm</location>
    </subcellularLocation>
</comment>
<comment type="subcellular location">
    <molecule>Protein 3CD</molecule>
    <subcellularLocation>
        <location evidence="2">Host nucleus</location>
    </subcellularLocation>
    <subcellularLocation>
        <location evidence="2">Host cytoplasm</location>
    </subcellularLocation>
    <subcellularLocation>
        <location evidence="6">Host cytoplasmic vesicle membrane</location>
        <topology evidence="6">Peripheral membrane protein</topology>
        <orientation evidence="6">Cytoplasmic side</orientation>
    </subcellularLocation>
    <text evidence="6">Probably localizes to the surface of intracellular membrane vesicles that are induced after virus infection as the site for viral RNA replication. These vesicles are derived from the endoplasmic reticulum.</text>
</comment>
<comment type="subcellular location">
    <molecule>RNA-directed RNA polymerase</molecule>
    <subcellularLocation>
        <location evidence="6">Host cytoplasmic vesicle membrane</location>
        <topology evidence="6">Peripheral membrane protein</topology>
        <orientation evidence="6">Cytoplasmic side</orientation>
    </subcellularLocation>
    <text evidence="6">Probably localizes to the surface of intracellular membrane vesicles that are induced after virus infection as the site for viral RNA replication. These vesicles are derived from the endoplasmic reticulum.</text>
</comment>
<comment type="domain">
    <molecule>Protein 2C</molecule>
    <text evidence="1 2">The N-terminus has membrane-binding (By similarity). The N-terminus also displays RNA-binding properties (By similarity). The N-terminus is involved in oligomerization (By similarity). The central part contains an ATPase domain and a degenerate C4-type zinc-finger with only 3 cysteines (By similarity). The C-terminus is involved in RNA-binding (By similarity). The extreme C-terminus contains a region involved in oligomerization (By similarity).</text>
</comment>
<comment type="PTM">
    <molecule>Genome polyprotein</molecule>
    <text evidence="2">Specific enzymatic cleavages in vivo by the viral proteases yield processing intermediates and the mature proteins.</text>
</comment>
<comment type="PTM">
    <molecule>Capsid protein VP0</molecule>
    <text evidence="2">Myristoylation is required for the formation of pentamers during virus assembly. Further assembly of 12 pentamers and a molecule of genomic RNA generates the provirion.</text>
</comment>
<comment type="PTM">
    <molecule>Capsid protein VP0</molecule>
    <text evidence="2">During virion maturation, immature virions are rendered infectious following cleavage of VP0 into VP4 and VP2. This maturation seems to be an autocatalytic event triggered by the presence of RNA in the capsid and it is followed by a conformational change infectious virion.</text>
</comment>
<comment type="PTM">
    <molecule>Capsid protein VP4</molecule>
    <text evidence="2">Myristoylation is required during RNA encapsidation and formation of the mature virus particle.</text>
</comment>
<comment type="PTM">
    <molecule>Viral protein genome-linked</molecule>
    <text evidence="2">VPg is uridylylated by the polymerase into VPg-pUpU. This acts as a nucleotide-peptide primer for the genomic RNA replication.</text>
</comment>
<comment type="similarity">
    <text evidence="17">Belongs to the picornaviruses polyprotein family.</text>
</comment>
<dbReference type="EC" id="3.4.22.29" evidence="2"/>
<dbReference type="EC" id="3.6.1.15" evidence="2"/>
<dbReference type="EC" id="3.4.22.28" evidence="11"/>
<dbReference type="EC" id="2.7.7.48" evidence="9"/>
<dbReference type="EMBL" id="GU219984">
    <property type="protein sequence ID" value="ACZ67658.1"/>
    <property type="molecule type" value="Genomic_RNA"/>
</dbReference>
<dbReference type="PDB" id="5JZG">
    <property type="method" value="EM"/>
    <property type="resolution" value="3.16 A"/>
    <property type="chains" value="A=568-846, B=333-567, C=2-332"/>
</dbReference>
<dbReference type="PDB" id="5K0U">
    <property type="method" value="EM"/>
    <property type="resolution" value="2.79 A"/>
    <property type="chains" value="A=568-846, B=333-567, C=68-332, D=2-67"/>
</dbReference>
<dbReference type="PDB" id="5X45">
    <property type="method" value="X-ray"/>
    <property type="resolution" value="2.60 A"/>
    <property type="chains" value="A/B/C/D=847-983"/>
</dbReference>
<dbReference type="PDB" id="6KU7">
    <property type="method" value="X-ray"/>
    <property type="resolution" value="2.15 A"/>
    <property type="chains" value="A=1511-1690"/>
</dbReference>
<dbReference type="PDB" id="6KU8">
    <property type="method" value="X-ray"/>
    <property type="resolution" value="2.05 A"/>
    <property type="chains" value="A=1514-1690"/>
</dbReference>
<dbReference type="PDB" id="6PPO">
    <property type="method" value="EM"/>
    <property type="resolution" value="3.20 A"/>
    <property type="chains" value="A=568-846, B=333-567, C=68-332, D=2-67"/>
</dbReference>
<dbReference type="PDB" id="6PSF">
    <property type="method" value="EM"/>
    <property type="resolution" value="3.50 A"/>
    <property type="chains" value="A=568-846, B=333-567, C=68-332, D=2-67"/>
</dbReference>
<dbReference type="PDBsum" id="5JZG"/>
<dbReference type="PDBsum" id="5K0U"/>
<dbReference type="PDBsum" id="5X45"/>
<dbReference type="PDBsum" id="6KU7"/>
<dbReference type="PDBsum" id="6KU8"/>
<dbReference type="PDBsum" id="6PPO"/>
<dbReference type="PDBsum" id="6PSF"/>
<dbReference type="EMDB" id="EMD-20443"/>
<dbReference type="EMDB" id="EMD-20458"/>
<dbReference type="EMDB" id="EMD-8184"/>
<dbReference type="EMDB" id="EMD-8189"/>
<dbReference type="SMR" id="E5D8F2"/>
<dbReference type="MEROPS" id="N08.001"/>
<dbReference type="Proteomes" id="UP000172643">
    <property type="component" value="Segment"/>
</dbReference>
<dbReference type="GO" id="GO:0044162">
    <property type="term" value="C:host cell cytoplasmic vesicle membrane"/>
    <property type="evidence" value="ECO:0007669"/>
    <property type="project" value="UniProtKB-SubCell"/>
</dbReference>
<dbReference type="GO" id="GO:0042025">
    <property type="term" value="C:host cell nucleus"/>
    <property type="evidence" value="ECO:0007669"/>
    <property type="project" value="UniProtKB-SubCell"/>
</dbReference>
<dbReference type="GO" id="GO:0016020">
    <property type="term" value="C:membrane"/>
    <property type="evidence" value="ECO:0007669"/>
    <property type="project" value="UniProtKB-KW"/>
</dbReference>
<dbReference type="GO" id="GO:0039618">
    <property type="term" value="C:T=pseudo3 icosahedral viral capsid"/>
    <property type="evidence" value="ECO:0007669"/>
    <property type="project" value="UniProtKB-KW"/>
</dbReference>
<dbReference type="GO" id="GO:0005524">
    <property type="term" value="F:ATP binding"/>
    <property type="evidence" value="ECO:0007669"/>
    <property type="project" value="UniProtKB-KW"/>
</dbReference>
<dbReference type="GO" id="GO:0015267">
    <property type="term" value="F:channel activity"/>
    <property type="evidence" value="ECO:0007669"/>
    <property type="project" value="UniProtKB-KW"/>
</dbReference>
<dbReference type="GO" id="GO:0004197">
    <property type="term" value="F:cysteine-type endopeptidase activity"/>
    <property type="evidence" value="ECO:0007669"/>
    <property type="project" value="UniProtKB-EC"/>
</dbReference>
<dbReference type="GO" id="GO:0017111">
    <property type="term" value="F:ribonucleoside triphosphate phosphatase activity"/>
    <property type="evidence" value="ECO:0007669"/>
    <property type="project" value="UniProtKB-EC"/>
</dbReference>
<dbReference type="GO" id="GO:0003723">
    <property type="term" value="F:RNA binding"/>
    <property type="evidence" value="ECO:0007669"/>
    <property type="project" value="UniProtKB-KW"/>
</dbReference>
<dbReference type="GO" id="GO:0003724">
    <property type="term" value="F:RNA helicase activity"/>
    <property type="evidence" value="ECO:0007669"/>
    <property type="project" value="InterPro"/>
</dbReference>
<dbReference type="GO" id="GO:0003968">
    <property type="term" value="F:RNA-directed RNA polymerase activity"/>
    <property type="evidence" value="ECO:0007669"/>
    <property type="project" value="UniProtKB-KW"/>
</dbReference>
<dbReference type="GO" id="GO:0005198">
    <property type="term" value="F:structural molecule activity"/>
    <property type="evidence" value="ECO:0007669"/>
    <property type="project" value="InterPro"/>
</dbReference>
<dbReference type="GO" id="GO:0008270">
    <property type="term" value="F:zinc ion binding"/>
    <property type="evidence" value="ECO:0007669"/>
    <property type="project" value="UniProtKB-KW"/>
</dbReference>
<dbReference type="GO" id="GO:0006260">
    <property type="term" value="P:DNA replication"/>
    <property type="evidence" value="ECO:0007669"/>
    <property type="project" value="UniProtKB-KW"/>
</dbReference>
<dbReference type="GO" id="GO:0006351">
    <property type="term" value="P:DNA-templated transcription"/>
    <property type="evidence" value="ECO:0007669"/>
    <property type="project" value="InterPro"/>
</dbReference>
<dbReference type="GO" id="GO:0075509">
    <property type="term" value="P:endocytosis involved in viral entry into host cell"/>
    <property type="evidence" value="ECO:0007669"/>
    <property type="project" value="UniProtKB-KW"/>
</dbReference>
<dbReference type="GO" id="GO:0034220">
    <property type="term" value="P:monoatomic ion transmembrane transport"/>
    <property type="evidence" value="ECO:0007669"/>
    <property type="project" value="UniProtKB-KW"/>
</dbReference>
<dbReference type="GO" id="GO:0006508">
    <property type="term" value="P:proteolysis"/>
    <property type="evidence" value="ECO:0007669"/>
    <property type="project" value="UniProtKB-KW"/>
</dbReference>
<dbReference type="GO" id="GO:0044694">
    <property type="term" value="P:symbiont genome entry into host cell via pore formation in plasma membrane"/>
    <property type="evidence" value="ECO:0007669"/>
    <property type="project" value="UniProtKB-KW"/>
</dbReference>
<dbReference type="GO" id="GO:0039520">
    <property type="term" value="P:symbiont-mediated activation of host autophagy"/>
    <property type="evidence" value="ECO:0007669"/>
    <property type="project" value="UniProtKB-KW"/>
</dbReference>
<dbReference type="GO" id="GO:0039540">
    <property type="term" value="P:symbiont-mediated suppression of host cytoplasmic pattern recognition receptor signaling pathway via inhibition of RIG-I activity"/>
    <property type="evidence" value="ECO:0007669"/>
    <property type="project" value="UniProtKB-KW"/>
</dbReference>
<dbReference type="GO" id="GO:0039522">
    <property type="term" value="P:symbiont-mediated suppression of host mRNA export from nucleus"/>
    <property type="evidence" value="ECO:0007669"/>
    <property type="project" value="UniProtKB-KW"/>
</dbReference>
<dbReference type="GO" id="GO:0039694">
    <property type="term" value="P:viral RNA genome replication"/>
    <property type="evidence" value="ECO:0007669"/>
    <property type="project" value="InterPro"/>
</dbReference>
<dbReference type="GO" id="GO:0019062">
    <property type="term" value="P:virion attachment to host cell"/>
    <property type="evidence" value="ECO:0007669"/>
    <property type="project" value="UniProtKB-KW"/>
</dbReference>
<dbReference type="CDD" id="cd00205">
    <property type="entry name" value="rhv_like"/>
    <property type="match status" value="3"/>
</dbReference>
<dbReference type="FunFam" id="2.40.10.10:FF:000020">
    <property type="entry name" value="Genome polyprotein"/>
    <property type="match status" value="1"/>
</dbReference>
<dbReference type="Gene3D" id="1.20.960.20">
    <property type="match status" value="1"/>
</dbReference>
<dbReference type="Gene3D" id="2.60.120.20">
    <property type="match status" value="3"/>
</dbReference>
<dbReference type="Gene3D" id="3.30.70.270">
    <property type="match status" value="1"/>
</dbReference>
<dbReference type="Gene3D" id="3.40.50.300">
    <property type="entry name" value="P-loop containing nucleotide triphosphate hydrolases"/>
    <property type="match status" value="1"/>
</dbReference>
<dbReference type="Gene3D" id="4.10.80.10">
    <property type="entry name" value="Picornavirus coat protein VP4"/>
    <property type="match status" value="1"/>
</dbReference>
<dbReference type="Gene3D" id="6.10.20.20">
    <property type="entry name" value="Poliovirus 3A protein-like"/>
    <property type="match status" value="1"/>
</dbReference>
<dbReference type="Gene3D" id="4.10.880.10">
    <property type="entry name" value="Poliovirus 3D polymerase Domain 1 (Nucleotidyltransferase)"/>
    <property type="match status" value="2"/>
</dbReference>
<dbReference type="Gene3D" id="2.40.10.10">
    <property type="entry name" value="Trypsin-like serine proteases"/>
    <property type="match status" value="4"/>
</dbReference>
<dbReference type="InterPro" id="IPR043502">
    <property type="entry name" value="DNA/RNA_pol_sf"/>
</dbReference>
<dbReference type="InterPro" id="IPR000605">
    <property type="entry name" value="Helicase_SF3_ssDNA/RNA_vir"/>
</dbReference>
<dbReference type="InterPro" id="IPR014759">
    <property type="entry name" value="Helicase_SF3_ssRNA_vir"/>
</dbReference>
<dbReference type="InterPro" id="IPR027417">
    <property type="entry name" value="P-loop_NTPase"/>
</dbReference>
<dbReference type="InterPro" id="IPR014838">
    <property type="entry name" value="P3A"/>
</dbReference>
<dbReference type="InterPro" id="IPR036203">
    <property type="entry name" value="P3A_soluble_dom"/>
</dbReference>
<dbReference type="InterPro" id="IPR044067">
    <property type="entry name" value="PCV_3C_PRO"/>
</dbReference>
<dbReference type="InterPro" id="IPR000081">
    <property type="entry name" value="Peptidase_C3"/>
</dbReference>
<dbReference type="InterPro" id="IPR000199">
    <property type="entry name" value="Peptidase_C3A/C3B_picornavir"/>
</dbReference>
<dbReference type="InterPro" id="IPR009003">
    <property type="entry name" value="Peptidase_S1_PA"/>
</dbReference>
<dbReference type="InterPro" id="IPR043504">
    <property type="entry name" value="Peptidase_S1_PA_chymotrypsin"/>
</dbReference>
<dbReference type="InterPro" id="IPR003138">
    <property type="entry name" value="Pico_P1A"/>
</dbReference>
<dbReference type="InterPro" id="IPR036988">
    <property type="entry name" value="Pico_P1A_sf"/>
</dbReference>
<dbReference type="InterPro" id="IPR002527">
    <property type="entry name" value="Pico_P2B"/>
</dbReference>
<dbReference type="InterPro" id="IPR001676">
    <property type="entry name" value="Picornavirus_capsid"/>
</dbReference>
<dbReference type="InterPro" id="IPR043128">
    <property type="entry name" value="Rev_trsase/Diguanyl_cyclase"/>
</dbReference>
<dbReference type="InterPro" id="IPR033703">
    <property type="entry name" value="Rhv-like"/>
</dbReference>
<dbReference type="InterPro" id="IPR001205">
    <property type="entry name" value="RNA-dir_pol_C"/>
</dbReference>
<dbReference type="InterPro" id="IPR007094">
    <property type="entry name" value="RNA-dir_pol_PSvirus"/>
</dbReference>
<dbReference type="InterPro" id="IPR029053">
    <property type="entry name" value="Viral_coat"/>
</dbReference>
<dbReference type="Pfam" id="PF08727">
    <property type="entry name" value="P3A"/>
    <property type="match status" value="1"/>
</dbReference>
<dbReference type="Pfam" id="PF00548">
    <property type="entry name" value="Peptidase_C3"/>
    <property type="match status" value="1"/>
</dbReference>
<dbReference type="Pfam" id="PF02226">
    <property type="entry name" value="Pico_P1A"/>
    <property type="match status" value="1"/>
</dbReference>
<dbReference type="Pfam" id="PF00947">
    <property type="entry name" value="Pico_P2A"/>
    <property type="match status" value="1"/>
</dbReference>
<dbReference type="Pfam" id="PF01552">
    <property type="entry name" value="Pico_P2B"/>
    <property type="match status" value="1"/>
</dbReference>
<dbReference type="Pfam" id="PF00680">
    <property type="entry name" value="RdRP_1"/>
    <property type="match status" value="1"/>
</dbReference>
<dbReference type="Pfam" id="PF00073">
    <property type="entry name" value="Rhv"/>
    <property type="match status" value="2"/>
</dbReference>
<dbReference type="Pfam" id="PF22663">
    <property type="entry name" value="Rhv_5"/>
    <property type="match status" value="1"/>
</dbReference>
<dbReference type="Pfam" id="PF00910">
    <property type="entry name" value="RNA_helicase"/>
    <property type="match status" value="1"/>
</dbReference>
<dbReference type="SUPFAM" id="SSF56672">
    <property type="entry name" value="DNA/RNA polymerases"/>
    <property type="match status" value="1"/>
</dbReference>
<dbReference type="SUPFAM" id="SSF52540">
    <property type="entry name" value="P-loop containing nucleoside triphosphate hydrolases"/>
    <property type="match status" value="1"/>
</dbReference>
<dbReference type="SUPFAM" id="SSF88633">
    <property type="entry name" value="Positive stranded ssRNA viruses"/>
    <property type="match status" value="2"/>
</dbReference>
<dbReference type="SUPFAM" id="SSF89043">
    <property type="entry name" value="Soluble domain of poliovirus core protein 3a"/>
    <property type="match status" value="1"/>
</dbReference>
<dbReference type="SUPFAM" id="SSF50494">
    <property type="entry name" value="Trypsin-like serine proteases"/>
    <property type="match status" value="2"/>
</dbReference>
<dbReference type="PROSITE" id="PS51874">
    <property type="entry name" value="PCV_3C_PRO"/>
    <property type="match status" value="1"/>
</dbReference>
<dbReference type="PROSITE" id="PS50507">
    <property type="entry name" value="RDRP_SSRNA_POS"/>
    <property type="match status" value="1"/>
</dbReference>
<dbReference type="PROSITE" id="PS51218">
    <property type="entry name" value="SF3_HELICASE_2"/>
    <property type="match status" value="1"/>
</dbReference>
<feature type="initiator methionine" description="Removed; by host" evidence="2">
    <location>
        <position position="1"/>
    </location>
</feature>
<feature type="chain" id="PRO_0000459560" description="Genome polyprotein">
    <location>
        <begin position="2"/>
        <end position="2153"/>
    </location>
</feature>
<feature type="chain" id="PRO_0000459561" description="P1">
    <location>
        <begin position="2"/>
        <end position="846"/>
    </location>
</feature>
<feature type="chain" id="PRO_0000459562" description="Capsid protein VP0">
    <location>
        <begin position="2"/>
        <end position="332"/>
    </location>
</feature>
<feature type="chain" id="PRO_0000459563" description="Capsid protein VP4">
    <location>
        <begin position="2"/>
        <end position="67"/>
    </location>
</feature>
<feature type="chain" id="PRO_0000459564" description="Capsid protein VP2">
    <location>
        <begin position="68"/>
        <end position="332"/>
    </location>
</feature>
<feature type="chain" id="PRO_0000459565" description="Capsid protein VP3">
    <location>
        <begin position="333"/>
        <end position="562"/>
    </location>
</feature>
<feature type="chain" id="PRO_0000459566" description="Capsid protein VP1">
    <location>
        <begin position="563"/>
        <end position="846"/>
    </location>
</feature>
<feature type="chain" id="PRO_0000459567" description="P2">
    <location>
        <begin position="847"/>
        <end position="1413"/>
    </location>
</feature>
<feature type="chain" id="PRO_0000459568" description="Protease 2A">
    <location>
        <begin position="847"/>
        <end position="988"/>
    </location>
</feature>
<feature type="chain" id="PRO_0000459569" description="Protein 2B">
    <location>
        <begin position="989"/>
        <end position="1087"/>
    </location>
</feature>
<feature type="chain" id="PRO_0000459570" description="Protein 2C">
    <location>
        <begin position="1088"/>
        <end position="1413"/>
    </location>
</feature>
<feature type="chain" id="PRO_0000459571" description="P3">
    <location>
        <begin position="1414"/>
        <end position="2152"/>
    </location>
</feature>
<feature type="chain" id="PRO_0000459572" description="Protein 3AB">
    <location>
        <begin position="1414"/>
        <end position="1510"/>
    </location>
</feature>
<feature type="chain" id="PRO_0000459573" description="Protein 3A">
    <location>
        <begin position="1414"/>
        <end position="1488"/>
    </location>
</feature>
<feature type="chain" id="PRO_0000459574" description="Viral protein genome-linked">
    <location>
        <begin position="1489"/>
        <end position="1510"/>
    </location>
</feature>
<feature type="chain" id="PRO_0000459575" description="Protein 3CD">
    <location>
        <begin position="1511"/>
        <end position="2152"/>
    </location>
</feature>
<feature type="chain" id="PRO_0000459576" description="Protease 3C">
    <location>
        <begin position="1511"/>
        <end position="1693"/>
    </location>
</feature>
<feature type="chain" id="PRO_0000459577" description="RNA-directed RNA polymerase">
    <location>
        <begin position="1694"/>
        <end position="2152"/>
    </location>
</feature>
<feature type="intramembrane region" evidence="8">
    <location>
        <begin position="1460"/>
        <end position="1480"/>
    </location>
</feature>
<feature type="domain" description="SF3 helicase" evidence="10">
    <location>
        <begin position="1187"/>
        <end position="1346"/>
    </location>
</feature>
<feature type="domain" description="Peptidase C3" evidence="11">
    <location>
        <begin position="1511"/>
        <end position="1689"/>
    </location>
</feature>
<feature type="domain" description="RdRp catalytic" evidence="9">
    <location>
        <begin position="1920"/>
        <end position="2033"/>
    </location>
</feature>
<feature type="zinc finger region" description="C4-type; degenerate" evidence="1">
    <location>
        <begin position="1353"/>
        <end position="1370"/>
    </location>
</feature>
<feature type="region of interest" description="Disordered" evidence="12">
    <location>
        <begin position="213"/>
        <end position="240"/>
    </location>
</feature>
<feature type="region of interest" description="Amphipathic alpha-helix" evidence="8">
    <location>
        <begin position="565"/>
        <end position="584"/>
    </location>
</feature>
<feature type="region of interest" description="Oligomerization" evidence="2">
    <location>
        <begin position="1088"/>
        <end position="1224"/>
    </location>
</feature>
<feature type="region of interest" description="Membrane-binding" evidence="2">
    <location>
        <begin position="1088"/>
        <end position="1158"/>
    </location>
</feature>
<feature type="region of interest" description="RNA-binding" evidence="2">
    <location>
        <begin position="1109"/>
        <end position="1113"/>
    </location>
</feature>
<feature type="region of interest" description="RNA-binding" evidence="2">
    <location>
        <begin position="1397"/>
        <end position="1404"/>
    </location>
</feature>
<feature type="region of interest" description="Oligomerization" evidence="2">
    <location>
        <begin position="1408"/>
        <end position="1413"/>
    </location>
</feature>
<feature type="compositionally biased region" description="Polar residues" evidence="12">
    <location>
        <begin position="216"/>
        <end position="232"/>
    </location>
</feature>
<feature type="active site" description="For protease 2A activity" evidence="18">
    <location>
        <position position="864"/>
    </location>
</feature>
<feature type="active site" description="For protease 2A activity" evidence="18">
    <location>
        <position position="880"/>
    </location>
</feature>
<feature type="active site" description="For protease 2A activity" evidence="18">
    <location>
        <position position="951"/>
    </location>
</feature>
<feature type="active site" description="For protease 3C activity" evidence="11">
    <location>
        <position position="1550"/>
    </location>
</feature>
<feature type="active site" description="For protease 3C activity" evidence="11">
    <location>
        <position position="1581"/>
    </location>
</feature>
<feature type="active site" description="For protease 3C activity" evidence="11">
    <location>
        <position position="1657"/>
    </location>
</feature>
<feature type="binding site" evidence="14">
    <location>
        <position position="897"/>
    </location>
    <ligand>
        <name>Zn(2+)</name>
        <dbReference type="ChEBI" id="CHEBI:29105"/>
        <label>1</label>
        <note>structural</note>
    </ligand>
</feature>
<feature type="binding site" evidence="14">
    <location>
        <position position="899"/>
    </location>
    <ligand>
        <name>Zn(2+)</name>
        <dbReference type="ChEBI" id="CHEBI:29105"/>
        <label>1</label>
        <note>structural</note>
    </ligand>
</feature>
<feature type="binding site" evidence="14">
    <location>
        <position position="957"/>
    </location>
    <ligand>
        <name>Zn(2+)</name>
        <dbReference type="ChEBI" id="CHEBI:29105"/>
        <label>1</label>
        <note>structural</note>
    </ligand>
</feature>
<feature type="binding site" evidence="14">
    <location>
        <position position="959"/>
    </location>
    <ligand>
        <name>Zn(2+)</name>
        <dbReference type="ChEBI" id="CHEBI:29105"/>
        <label>1</label>
        <note>structural</note>
    </ligand>
</feature>
<feature type="binding site" evidence="10">
    <location>
        <begin position="1214"/>
        <end position="1221"/>
    </location>
    <ligand>
        <name>ATP</name>
        <dbReference type="ChEBI" id="CHEBI:30616"/>
    </ligand>
</feature>
<feature type="binding site" evidence="1">
    <location>
        <position position="1353"/>
    </location>
    <ligand>
        <name>Zn(2+)</name>
        <dbReference type="ChEBI" id="CHEBI:29105"/>
        <label>2</label>
    </ligand>
</feature>
<feature type="binding site" evidence="1">
    <location>
        <position position="1365"/>
    </location>
    <ligand>
        <name>Zn(2+)</name>
        <dbReference type="ChEBI" id="CHEBI:29105"/>
        <label>2</label>
    </ligand>
</feature>
<feature type="binding site" evidence="1">
    <location>
        <position position="1370"/>
    </location>
    <ligand>
        <name>Zn(2+)</name>
        <dbReference type="ChEBI" id="CHEBI:29105"/>
        <label>2</label>
    </ligand>
</feature>
<feature type="binding site" evidence="2">
    <location>
        <position position="1926"/>
    </location>
    <ligand>
        <name>Mg(2+)</name>
        <dbReference type="ChEBI" id="CHEBI:18420"/>
        <label>1</label>
        <note>catalytic; for RdRp activity</note>
    </ligand>
</feature>
<feature type="binding site" evidence="2">
    <location>
        <position position="1926"/>
    </location>
    <ligand>
        <name>Mg(2+)</name>
        <dbReference type="ChEBI" id="CHEBI:18420"/>
        <label>2</label>
        <note>catalytic; for RdRp activity</note>
    </ligand>
</feature>
<feature type="binding site" evidence="2">
    <location>
        <position position="2019"/>
    </location>
    <ligand>
        <name>Mg(2+)</name>
        <dbReference type="ChEBI" id="CHEBI:18420"/>
        <label>1</label>
        <note>catalytic; for RdRp activity</note>
    </ligand>
</feature>
<feature type="binding site" evidence="2">
    <location>
        <position position="2019"/>
    </location>
    <ligand>
        <name>Mg(2+)</name>
        <dbReference type="ChEBI" id="CHEBI:18420"/>
        <label>2</label>
        <note>catalytic; for RdRp activity</note>
    </ligand>
</feature>
<feature type="site" description="Cleavage; by autolysis" evidence="2">
    <location>
        <begin position="67"/>
        <end position="68"/>
    </location>
</feature>
<feature type="site" description="Cleavage; by protease 3C" evidence="3">
    <location>
        <begin position="332"/>
        <end position="333"/>
    </location>
</feature>
<feature type="site" description="Cleavage; by autolysis" evidence="3">
    <location>
        <begin position="846"/>
        <end position="847"/>
    </location>
</feature>
<feature type="site" description="Cleavage; by protease 3C" evidence="3">
    <location>
        <begin position="988"/>
        <end position="989"/>
    </location>
</feature>
<feature type="site" description="Cleavage; by protease 3C" evidence="3">
    <location>
        <begin position="1087"/>
        <end position="1088"/>
    </location>
</feature>
<feature type="site" description="Involved in the interaction with host RTN3" evidence="7">
    <location>
        <position position="1112"/>
    </location>
</feature>
<feature type="site" description="Cleavage; by protease 3C" evidence="3">
    <location>
        <begin position="1413"/>
        <end position="1414"/>
    </location>
</feature>
<feature type="site" description="Cleavage; by protease 3C" evidence="3">
    <location>
        <begin position="1488"/>
        <end position="1489"/>
    </location>
</feature>
<feature type="site" description="Cleavage; by protease 3C" evidence="3">
    <location>
        <begin position="1510"/>
        <end position="1511"/>
    </location>
</feature>
<feature type="site" description="Cleavage; by protease 3C" evidence="3">
    <location>
        <begin position="1693"/>
        <end position="1694"/>
    </location>
</feature>
<feature type="modified residue" description="O-(5'-phospho-RNA)-tyrosine" evidence="2">
    <location>
        <position position="1491"/>
    </location>
</feature>
<feature type="lipid moiety-binding region" description="N-myristoyl glycine; by host" evidence="2">
    <location>
        <position position="2"/>
    </location>
</feature>
<feature type="strand" evidence="27">
    <location>
        <begin position="32"/>
        <end position="34"/>
    </location>
</feature>
<feature type="strand" evidence="27">
    <location>
        <begin position="36"/>
        <end position="39"/>
    </location>
</feature>
<feature type="strand" evidence="26">
    <location>
        <begin position="46"/>
        <end position="48"/>
    </location>
</feature>
<feature type="helix" evidence="27">
    <location>
        <begin position="50"/>
        <end position="52"/>
    </location>
</feature>
<feature type="strand" evidence="26">
    <location>
        <begin position="71"/>
        <end position="74"/>
    </location>
</feature>
<feature type="strand" evidence="27">
    <location>
        <begin position="81"/>
        <end position="85"/>
    </location>
</feature>
<feature type="strand" evidence="27">
    <location>
        <begin position="88"/>
        <end position="94"/>
    </location>
</feature>
<feature type="helix" evidence="27">
    <location>
        <begin position="101"/>
        <end position="103"/>
    </location>
</feature>
<feature type="strand" evidence="27">
    <location>
        <begin position="111"/>
        <end position="113"/>
    </location>
</feature>
<feature type="helix" evidence="27">
    <location>
        <begin position="124"/>
        <end position="126"/>
    </location>
</feature>
<feature type="strand" evidence="27">
    <location>
        <begin position="136"/>
        <end position="139"/>
    </location>
</feature>
<feature type="strand" evidence="27">
    <location>
        <begin position="145"/>
        <end position="149"/>
    </location>
</feature>
<feature type="helix" evidence="27">
    <location>
        <begin position="151"/>
        <end position="153"/>
    </location>
</feature>
<feature type="helix" evidence="27">
    <location>
        <begin position="157"/>
        <end position="164"/>
    </location>
</feature>
<feature type="strand" evidence="27">
    <location>
        <begin position="165"/>
        <end position="178"/>
    </location>
</feature>
<feature type="strand" evidence="27">
    <location>
        <begin position="186"/>
        <end position="195"/>
    </location>
</feature>
<feature type="strand" evidence="27">
    <location>
        <begin position="201"/>
        <end position="205"/>
    </location>
</feature>
<feature type="helix" evidence="27">
    <location>
        <begin position="211"/>
        <end position="214"/>
    </location>
</feature>
<feature type="helix" evidence="27">
    <location>
        <begin position="217"/>
        <end position="219"/>
    </location>
</feature>
<feature type="strand" evidence="32">
    <location>
        <begin position="228"/>
        <end position="230"/>
    </location>
</feature>
<feature type="helix" evidence="27">
    <location>
        <begin position="233"/>
        <end position="235"/>
    </location>
</feature>
<feature type="turn" evidence="27">
    <location>
        <begin position="241"/>
        <end position="247"/>
    </location>
</feature>
<feature type="helix" evidence="27">
    <location>
        <begin position="253"/>
        <end position="255"/>
    </location>
</feature>
<feature type="strand" evidence="27">
    <location>
        <begin position="256"/>
        <end position="262"/>
    </location>
</feature>
<feature type="turn" evidence="27">
    <location>
        <begin position="263"/>
        <end position="265"/>
    </location>
</feature>
<feature type="strand" evidence="27">
    <location>
        <begin position="267"/>
        <end position="273"/>
    </location>
</feature>
<feature type="strand" evidence="27">
    <location>
        <begin position="278"/>
        <end position="280"/>
    </location>
</feature>
<feature type="turn" evidence="27">
    <location>
        <begin position="284"/>
        <end position="286"/>
    </location>
</feature>
<feature type="strand" evidence="27">
    <location>
        <begin position="290"/>
        <end position="301"/>
    </location>
</feature>
<feature type="strand" evidence="27">
    <location>
        <begin position="304"/>
        <end position="306"/>
    </location>
</feature>
<feature type="strand" evidence="27">
    <location>
        <begin position="309"/>
        <end position="326"/>
    </location>
</feature>
<feature type="strand" evidence="31">
    <location>
        <begin position="340"/>
        <end position="343"/>
    </location>
</feature>
<feature type="strand" evidence="27">
    <location>
        <begin position="355"/>
        <end position="357"/>
    </location>
</feature>
<feature type="strand" evidence="27">
    <location>
        <begin position="372"/>
        <end position="374"/>
    </location>
</feature>
<feature type="helix" evidence="27">
    <location>
        <begin position="376"/>
        <end position="379"/>
    </location>
</feature>
<feature type="turn" evidence="27">
    <location>
        <begin position="391"/>
        <end position="395"/>
    </location>
</feature>
<feature type="helix" evidence="27">
    <location>
        <begin position="397"/>
        <end position="400"/>
    </location>
</feature>
<feature type="strand" evidence="27">
    <location>
        <begin position="402"/>
        <end position="404"/>
    </location>
</feature>
<feature type="strand" evidence="27">
    <location>
        <begin position="412"/>
        <end position="417"/>
    </location>
</feature>
<feature type="strand" evidence="31">
    <location>
        <begin position="420"/>
        <end position="422"/>
    </location>
</feature>
<feature type="helix" evidence="27">
    <location>
        <begin position="423"/>
        <end position="426"/>
    </location>
</feature>
<feature type="helix" evidence="27">
    <location>
        <begin position="429"/>
        <end position="434"/>
    </location>
</feature>
<feature type="strand" evidence="27">
    <location>
        <begin position="437"/>
        <end position="442"/>
    </location>
</feature>
<feature type="strand" evidence="27">
    <location>
        <begin position="444"/>
        <end position="451"/>
    </location>
</feature>
<feature type="strand" evidence="27">
    <location>
        <begin position="457"/>
        <end position="465"/>
    </location>
</feature>
<feature type="helix" evidence="27">
    <location>
        <begin position="475"/>
        <end position="478"/>
    </location>
</feature>
<feature type="strand" evidence="27">
    <location>
        <begin position="481"/>
        <end position="491"/>
    </location>
</feature>
<feature type="strand" evidence="27">
    <location>
        <begin position="493"/>
        <end position="498"/>
    </location>
</feature>
<feature type="strand" evidence="27">
    <location>
        <begin position="503"/>
        <end position="505"/>
    </location>
</feature>
<feature type="strand" evidence="27">
    <location>
        <begin position="507"/>
        <end position="510"/>
    </location>
</feature>
<feature type="turn" evidence="27">
    <location>
        <begin position="513"/>
        <end position="515"/>
    </location>
</feature>
<feature type="strand" evidence="27">
    <location>
        <begin position="519"/>
        <end position="529"/>
    </location>
</feature>
<feature type="strand" evidence="31">
    <location>
        <begin position="531"/>
        <end position="534"/>
    </location>
</feature>
<feature type="strand" evidence="27">
    <location>
        <begin position="537"/>
        <end position="545"/>
    </location>
</feature>
<feature type="strand" evidence="27">
    <location>
        <begin position="550"/>
        <end position="554"/>
    </location>
</feature>
<feature type="strand" evidence="27">
    <location>
        <begin position="602"/>
        <end position="605"/>
    </location>
</feature>
<feature type="helix" evidence="27">
    <location>
        <begin position="607"/>
        <end position="609"/>
    </location>
</feature>
<feature type="helix" evidence="27">
    <location>
        <begin position="617"/>
        <end position="620"/>
    </location>
</feature>
<feature type="helix" evidence="27">
    <location>
        <begin position="633"/>
        <end position="635"/>
    </location>
</feature>
<feature type="helix" evidence="27">
    <location>
        <begin position="637"/>
        <end position="641"/>
    </location>
</feature>
<feature type="strand" evidence="27">
    <location>
        <begin position="645"/>
        <end position="651"/>
    </location>
</feature>
<feature type="strand" evidence="27">
    <location>
        <begin position="653"/>
        <end position="660"/>
    </location>
</feature>
<feature type="strand" evidence="26">
    <location>
        <begin position="663"/>
        <end position="665"/>
    </location>
</feature>
<feature type="helix" evidence="27">
    <location>
        <begin position="667"/>
        <end position="673"/>
    </location>
</feature>
<feature type="strand" evidence="27">
    <location>
        <begin position="676"/>
        <end position="689"/>
    </location>
</feature>
<feature type="strand" evidence="27">
    <location>
        <begin position="695"/>
        <end position="700"/>
    </location>
</feature>
<feature type="helix" evidence="27">
    <location>
        <begin position="713"/>
        <end position="715"/>
    </location>
</feature>
<feature type="strand" evidence="27">
    <location>
        <begin position="718"/>
        <end position="720"/>
    </location>
</feature>
<feature type="strand" evidence="27">
    <location>
        <begin position="722"/>
        <end position="725"/>
    </location>
</feature>
<feature type="strand" evidence="27">
    <location>
        <begin position="727"/>
        <end position="729"/>
    </location>
</feature>
<feature type="strand" evidence="27">
    <location>
        <begin position="733"/>
        <end position="736"/>
    </location>
</feature>
<feature type="strand" evidence="27">
    <location>
        <begin position="741"/>
        <end position="747"/>
    </location>
</feature>
<feature type="strand" evidence="27">
    <location>
        <begin position="751"/>
        <end position="754"/>
    </location>
</feature>
<feature type="strand" evidence="27">
    <location>
        <begin position="763"/>
        <end position="765"/>
    </location>
</feature>
<feature type="turn" evidence="27">
    <location>
        <begin position="766"/>
        <end position="768"/>
    </location>
</feature>
<feature type="strand" evidence="27">
    <location>
        <begin position="773"/>
        <end position="780"/>
    </location>
</feature>
<feature type="strand" evidence="27">
    <location>
        <begin position="786"/>
        <end position="798"/>
    </location>
</feature>
<feature type="turn" evidence="27">
    <location>
        <begin position="812"/>
        <end position="814"/>
    </location>
</feature>
<feature type="strand" evidence="27">
    <location>
        <begin position="823"/>
        <end position="825"/>
    </location>
</feature>
<feature type="turn" evidence="27">
    <location>
        <begin position="826"/>
        <end position="829"/>
    </location>
</feature>
<feature type="strand" evidence="28">
    <location>
        <begin position="851"/>
        <end position="854"/>
    </location>
</feature>
<feature type="strand" evidence="28">
    <location>
        <begin position="856"/>
        <end position="862"/>
    </location>
</feature>
<feature type="helix" evidence="28">
    <location>
        <begin position="863"/>
        <end position="865"/>
    </location>
</feature>
<feature type="strand" evidence="28">
    <location>
        <begin position="872"/>
        <end position="876"/>
    </location>
</feature>
<feature type="turn" evidence="28">
    <location>
        <begin position="877"/>
        <end position="880"/>
    </location>
</feature>
<feature type="strand" evidence="28">
    <location>
        <begin position="881"/>
        <end position="885"/>
    </location>
</feature>
<feature type="strand" evidence="28">
    <location>
        <begin position="901"/>
        <end position="906"/>
    </location>
</feature>
<feature type="turn" evidence="28">
    <location>
        <begin position="907"/>
        <end position="910"/>
    </location>
</feature>
<feature type="strand" evidence="28">
    <location>
        <begin position="911"/>
        <end position="925"/>
    </location>
</feature>
<feature type="strand" evidence="28">
    <location>
        <begin position="929"/>
        <end position="931"/>
    </location>
</feature>
<feature type="strand" evidence="28">
    <location>
        <begin position="933"/>
        <end position="943"/>
    </location>
</feature>
<feature type="strand" evidence="28">
    <location>
        <begin position="954"/>
        <end position="957"/>
    </location>
</feature>
<feature type="strand" evidence="28">
    <location>
        <begin position="960"/>
        <end position="968"/>
    </location>
</feature>
<feature type="strand" evidence="28">
    <location>
        <begin position="973"/>
        <end position="978"/>
    </location>
</feature>
<feature type="helix" evidence="28">
    <location>
        <begin position="979"/>
        <end position="981"/>
    </location>
</feature>
<feature type="helix" evidence="30">
    <location>
        <begin position="1515"/>
        <end position="1524"/>
    </location>
</feature>
<feature type="strand" evidence="30">
    <location>
        <begin position="1525"/>
        <end position="1530"/>
    </location>
</feature>
<feature type="strand" evidence="30">
    <location>
        <begin position="1533"/>
        <end position="1542"/>
    </location>
</feature>
<feature type="strand" evidence="30">
    <location>
        <begin position="1544"/>
        <end position="1548"/>
    </location>
</feature>
<feature type="helix" evidence="30">
    <location>
        <begin position="1549"/>
        <end position="1551"/>
    </location>
</feature>
<feature type="strand" evidence="30">
    <location>
        <begin position="1555"/>
        <end position="1559"/>
    </location>
</feature>
<feature type="strand" evidence="30">
    <location>
        <begin position="1562"/>
        <end position="1573"/>
    </location>
</feature>
<feature type="strand" evidence="30">
    <location>
        <begin position="1579"/>
        <end position="1587"/>
    </location>
</feature>
<feature type="helix" evidence="30">
    <location>
        <begin position="1597"/>
        <end position="1599"/>
    </location>
</feature>
<feature type="strand" evidence="30">
    <location>
        <begin position="1607"/>
        <end position="1614"/>
    </location>
</feature>
<feature type="strand" evidence="30">
    <location>
        <begin position="1617"/>
        <end position="1619"/>
    </location>
</feature>
<feature type="strand" evidence="30">
    <location>
        <begin position="1622"/>
        <end position="1637"/>
    </location>
</feature>
<feature type="strand" evidence="30">
    <location>
        <begin position="1640"/>
        <end position="1650"/>
    </location>
</feature>
<feature type="helix" evidence="29">
    <location>
        <begin position="1654"/>
        <end position="1656"/>
    </location>
</feature>
<feature type="strand" evidence="30">
    <location>
        <begin position="1660"/>
        <end position="1663"/>
    </location>
</feature>
<feature type="strand" evidence="30">
    <location>
        <begin position="1666"/>
        <end position="1674"/>
    </location>
</feature>
<feature type="strand" evidence="30">
    <location>
        <begin position="1679"/>
        <end position="1683"/>
    </location>
</feature>
<feature type="helix" evidence="30">
    <location>
        <begin position="1686"/>
        <end position="1689"/>
    </location>
</feature>
<accession>E5D8F2</accession>
<organism>
    <name type="scientific">Human rhinovirus C (strain C15)</name>
    <name type="common">HRV-C15</name>
    <dbReference type="NCBI Taxonomy" id="1418033"/>
    <lineage>
        <taxon>Viruses</taxon>
        <taxon>Riboviria</taxon>
        <taxon>Orthornavirae</taxon>
        <taxon>Pisuviricota</taxon>
        <taxon>Pisoniviricetes</taxon>
        <taxon>Picornavirales</taxon>
        <taxon>Picornaviridae</taxon>
        <taxon>Ensavirinae</taxon>
        <taxon>Enterovirus</taxon>
        <taxon>Rhinovirus C</taxon>
    </lineage>
</organism>
<name>POLG_HRV15</name>
<evidence type="ECO:0000250" key="1">
    <source>
        <dbReference type="UniProtKB" id="B9VUU3"/>
    </source>
</evidence>
<evidence type="ECO:0000250" key="2">
    <source>
        <dbReference type="UniProtKB" id="P03300"/>
    </source>
</evidence>
<evidence type="ECO:0000250" key="3">
    <source>
        <dbReference type="UniProtKB" id="P03301"/>
    </source>
</evidence>
<evidence type="ECO:0000250" key="4">
    <source>
        <dbReference type="UniProtKB" id="P03313"/>
    </source>
</evidence>
<evidence type="ECO:0000250" key="5">
    <source>
        <dbReference type="UniProtKB" id="P04936"/>
    </source>
</evidence>
<evidence type="ECO:0000250" key="6">
    <source>
        <dbReference type="UniProtKB" id="P23008"/>
    </source>
</evidence>
<evidence type="ECO:0000250" key="7">
    <source>
        <dbReference type="UniProtKB" id="Q66478"/>
    </source>
</evidence>
<evidence type="ECO:0000255" key="8"/>
<evidence type="ECO:0000255" key="9">
    <source>
        <dbReference type="PROSITE-ProRule" id="PRU00539"/>
    </source>
</evidence>
<evidence type="ECO:0000255" key="10">
    <source>
        <dbReference type="PROSITE-ProRule" id="PRU00551"/>
    </source>
</evidence>
<evidence type="ECO:0000255" key="11">
    <source>
        <dbReference type="PROSITE-ProRule" id="PRU01222"/>
    </source>
</evidence>
<evidence type="ECO:0000256" key="12">
    <source>
        <dbReference type="SAM" id="MobiDB-lite"/>
    </source>
</evidence>
<evidence type="ECO:0000269" key="13">
    <source>
    </source>
</evidence>
<evidence type="ECO:0000269" key="14">
    <source>
    </source>
</evidence>
<evidence type="ECO:0000269" key="15">
    <source>
    </source>
</evidence>
<evidence type="ECO:0000303" key="16">
    <source>
    </source>
</evidence>
<evidence type="ECO:0000305" key="17"/>
<evidence type="ECO:0000305" key="18">
    <source>
    </source>
</evidence>
<evidence type="ECO:0007744" key="19">
    <source>
        <dbReference type="PDB" id="5JZG"/>
    </source>
</evidence>
<evidence type="ECO:0007744" key="20">
    <source>
        <dbReference type="PDB" id="5K0U"/>
    </source>
</evidence>
<evidence type="ECO:0007744" key="21">
    <source>
        <dbReference type="PDB" id="5X45"/>
    </source>
</evidence>
<evidence type="ECO:0007744" key="22">
    <source>
        <dbReference type="PDB" id="6KU7"/>
    </source>
</evidence>
<evidence type="ECO:0007744" key="23">
    <source>
        <dbReference type="PDB" id="6KU8"/>
    </source>
</evidence>
<evidence type="ECO:0007744" key="24">
    <source>
        <dbReference type="PDB" id="6PPO"/>
    </source>
</evidence>
<evidence type="ECO:0007744" key="25">
    <source>
        <dbReference type="PDB" id="6PSF"/>
    </source>
</evidence>
<evidence type="ECO:0007829" key="26">
    <source>
        <dbReference type="PDB" id="5JZG"/>
    </source>
</evidence>
<evidence type="ECO:0007829" key="27">
    <source>
        <dbReference type="PDB" id="5K0U"/>
    </source>
</evidence>
<evidence type="ECO:0007829" key="28">
    <source>
        <dbReference type="PDB" id="5X45"/>
    </source>
</evidence>
<evidence type="ECO:0007829" key="29">
    <source>
        <dbReference type="PDB" id="6KU7"/>
    </source>
</evidence>
<evidence type="ECO:0007829" key="30">
    <source>
        <dbReference type="PDB" id="6KU8"/>
    </source>
</evidence>
<evidence type="ECO:0007829" key="31">
    <source>
        <dbReference type="PDB" id="6PPO"/>
    </source>
</evidence>
<evidence type="ECO:0007829" key="32">
    <source>
        <dbReference type="PDB" id="6PSF"/>
    </source>
</evidence>
<reference key="1">
    <citation type="journal article" date="2011" name="Nat. Med.">
        <title>Molecular modeling, organ culture and reverse genetics for a newly identified human rhinovirus C.</title>
        <authorList>
            <person name="Bochkov Y.A."/>
            <person name="Palmenberg A.C."/>
            <person name="Lee W.M."/>
            <person name="Rathe J.A."/>
            <person name="Amineva S.P."/>
            <person name="Sun X."/>
            <person name="Pasic T.R."/>
            <person name="Jarjour N.N."/>
            <person name="Liggett S.B."/>
            <person name="Gern J.E."/>
        </authorList>
    </citation>
    <scope>NUCLEOTIDE SEQUENCE [LARGE SCALE GENOMIC DNA]</scope>
</reference>
<reference evidence="19 20" key="2">
    <citation type="journal article" date="2016" name="Proc. Natl. Acad. Sci. U.S.A.">
        <title>Atomic structure of a rhinovirus C, a virus species linked to severe childhood asthma.</title>
        <authorList>
            <person name="Liu Y."/>
            <person name="Hill M.G."/>
            <person name="Klose T."/>
            <person name="Chen Z."/>
            <person name="Watters K."/>
            <person name="Bochkov Y.A."/>
            <person name="Jiang W."/>
            <person name="Palmenberg A.C."/>
            <person name="Rossmann M.G."/>
        </authorList>
    </citation>
    <scope>STRUCTURE BY ELECTRON MICROSCOPY (2.79 ANGSTROMS) OF THE VIRION</scope>
    <scope>SUBCELLULAR LOCATION (CAPSID PROTEIN VP1)</scope>
    <scope>SUBCELLULAR LOCATION (CAPSID PROTEIN VP2)</scope>
    <scope>SUBCELLULAR LOCATION (CAPSID PROTEIN VP3)</scope>
    <scope>FUNCTION (CAPSID PROTEIN VP1)</scope>
    <scope>FUNCTION (CAPSID PROTEIN VP2)</scope>
    <scope>FUNCTION (CAPSID PROTEIN VP3)</scope>
    <scope>FUNCTION (CAPSID PROTEIN VP4)</scope>
    <scope>INTERACTION WITH CAPSID PROTEIN VP1 (CAPSID PROTEIN VP4)</scope>
    <scope>INTERACTION WITH CAPSID PROTEIN VP4 (CAPSID PROTEIN VP1)</scope>
    <scope>INTERACTION WITH CAPSID PROTEIN VP1 (CAPSID PROTEIN VP0)</scope>
    <scope>INTERACTION WITH CAPSID PROTEIN VP0 (CAPSID PROTEIN VP1)</scope>
    <scope>INTERACTION WITH CAPSID PROTEIN VP1 (CAPSID PROTEIN VP2)</scope>
    <scope>INTERACTION WITH CAPSID PROTEIN VP2 (CAPSID PROTEIN VP1)</scope>
    <scope>INTERACTION WITH CAPSID PROTEIN VP1 (CAPSID PROTEIN VP3)</scope>
    <scope>INTERACTION WITH CAPSID PROTEIN VP3 (CAPSID PROTEIN VP1)</scope>
    <scope>INTERACTION WITH CAPSID PROTEIN VP3 (CAPSID PROTEIN VP2)</scope>
    <scope>INTERACTION WITH CAPSID PROTEIN VP2 (CAPSID PROTEIN VP3)</scope>
    <source>
        <strain>Isolate C15a</strain>
    </source>
</reference>
<reference evidence="21" key="3">
    <citation type="journal article" date="2018" name="Acta Crystallogr. F">
        <title>Structural view of the 2A protease from human rhinovirus C15.</title>
        <authorList>
            <person name="Ling H."/>
            <person name="Yang P."/>
            <person name="Hou H."/>
            <person name="Sun Y."/>
        </authorList>
    </citation>
    <scope>X-RAY CRYSTALLOGRAPHY (2.60 ANGSTROMS) OF 847-983 IN COMPLEX WITH ZINC</scope>
    <scope>ACTIVE SITE (PROTEASE 2A)</scope>
</reference>
<reference evidence="24 25" key="4">
    <citation type="journal article" date="2020" name="Proc. Natl. Acad. Sci. U.S.A.">
        <title>Cryo-EM structure of rhinovirus C15a bound to its cadherin-related protein 3 receptor.</title>
        <authorList>
            <person name="Sun Y."/>
            <person name="Watters K."/>
            <person name="Hill M.G."/>
            <person name="Fang Q."/>
            <person name="Liu Y."/>
            <person name="Kuhn R.J."/>
            <person name="Klose T."/>
            <person name="Rossmann M.G."/>
            <person name="Palmenberg A.C."/>
        </authorList>
    </citation>
    <scope>STRUCTURE BY ELECTRON MICROSCOPY (3.20 ANGSTROMS) OF THE VIRION</scope>
    <scope>INTERACTION WITH HOST RECEPTOR CDHR3</scope>
    <scope>SUBCELLULAR LOCATION (CAPSID PROTEIN VP1)</scope>
    <scope>SUBCELLULAR LOCATION (CAPSID PROTEIN VP2)</scope>
    <scope>SUBCELLULAR LOCATION (CAPSID PROTEIN VP3)</scope>
    <scope>SUBCELLULAR LOCATION (CAPSID PROTEIN VP4)</scope>
    <scope>FUNCTION (CAPSID PROTEIN VP1)</scope>
    <scope>FUNCTION (CAPSID PROTEIN VP2)</scope>
    <scope>FUNCTION (CAPSID PROTEIN VP3)</scope>
    <scope>FUNCTION (CAPSID PROTEIN VP4)</scope>
    <scope>INTERACTION WITH CAPSID PROTEIN VP1 (CAPSID PROTEIN VP4)</scope>
    <scope>INTERACTION WITH CAPSID PROTEIN VP4 (CAPSID PROTEIN VP1)</scope>
    <scope>INTERACTION WITH CAPSID PROTEIN VP1 (CAPSID PROTEIN VP0)</scope>
    <scope>INTERACTION WITH CAPSID PROTEIN VP0 (CAPSID PROTEIN VP1)</scope>
    <scope>INTERACTION WITH CAPSID PROTEIN VP1 (CAPSID PROTEIN VP2)</scope>
    <scope>INTERACTION WITH CAPSID PROTEIN VP2 (CAPSID PROTEIN VP1)</scope>
    <scope>INTERACTION WITH CAPSID PROTEIN VP1 (CAPSID PROTEIN VP3)</scope>
    <scope>INTERACTION WITH CAPSID PROTEIN VP3 (CAPSID PROTEIN VP1)</scope>
    <scope>INTERACTION WITH CAPSID PROTEIN VP3 (CAPSID PROTEIN VP2)</scope>
    <scope>INTERACTION WITH CAPSID PROTEIN VP2 (CAPSID PROTEIN VP3)</scope>
    <source>
        <strain>Isolate C15a</strain>
    </source>
</reference>
<reference evidence="22 23" key="5">
    <citation type="journal article" date="2020" name="Virol. Sin.">
        <title>Structure of the HRV-C 3C-Rupintrivir Complex Provides New Insights for Inhibitor Design.</title>
        <authorList>
            <person name="Yuan S."/>
            <person name="Fan K."/>
            <person name="Chen Z."/>
            <person name="Sun Y."/>
            <person name="Hou H."/>
            <person name="Zhu L."/>
        </authorList>
    </citation>
    <scope>X-RAY CRYSTALLOGRAPHY (2.05 ANGSTROMS) OF 1514-1690</scope>
</reference>
<sequence>MGAQVSRQNNGTHENGVTASNGSVIKYFNINYYKDSASSGLSRQDFSQDPSKFTQPLVDTLTNPALMSPSVEACGYSDRLKQITIGNSTITTQDSLHTVLAYGEWPTYLSDIDATSVDKPTHPETSADRFYTLDSVEWQVGSHGWWWKLPDALKDMGVFGQNMYYHSMGRSGFIIHTQCNATKFHSGALIVAVIPEHQLAYVGGVKVNVGYDHTHPGQSGHQIRGPSQSNDRSGGKPDEDPLFNCNGTLLGNITIFPHQIINLRTNNSSTIVVPYINCVPMDNMLKHNNLSLVIIPLVPLRPGSSGINSVPITVTIAPYKSEFSGAMEAQRQGLPTRLPSGSQQFMTTEDEQSPNILPGFHPSKKIHIPGMITNVMHMARVDSFIPINNIQGEVGKVSMYYITVTKKTVTERILVLPLEMSNTLFATTLLGEVLNYYANWSGSITITFMCVCDAFSTGKFLVAYTPPGGKLPEDRKQAMLGVHIIWDLGLQSSCTIVVPWISSGFYRRTKADSFTHGGYVSLWYQTAFVPPVSGGTGSILATCSACPDMSVRMLRDSPMMEQKNELQNNDDPVENFVESTLKEVLVVPDTKPSGPQHTTKPSILGAMEIGASSNATPESTIETRYVYNTNTNAEADVEMFLGRSALWGKVTLTRQYAKWEINFQEQAHIRKKFEFFTYLRFDMEVTIVTNNTGLMQIMFVPPGIDHPETHDDRKWDSASNPSVFFQPKSGFPRFTIPFTGLASAYYMFYDGYDKPKGSDNNEYGIAPTNDMGLLCFRTLDNSGGNDVKIYVKPKHITAWVPRPPRATQYTHKYSTNYHYKPNSSGPDEHVLKDRHFIKTRPLISSAGPSDMFVHTRDAIYKCAHLTNPTDETILLALTADLQVDSTNVPGPDVIPCCDCTAGCYYSRSKDRYFPVECVSHDWYEIQESGYYPKHIQYNLLIGEGHCEPGDCGGKLLCKHGVIGMITAGGDNHVAFTDLRPYSSLSEHQGVISDYFTQLGNAFGEGFTTNIQDHFSQITKSISDKFTSKAIKWLVRIISALTIMIRNNSDLPTILATLSLLGCSSSPWSFLKDKICSWLQIQRPASKQSDSWLRKFTECCNAAKGLEWISIKIGKFIDWLKGKLVPAVQRKRDTLDRCKKISLLEEQVNGFSSASSEAQQQLIVEVDTLKKGLDELAPLYASENKRVTKIQKDLKQLSAYLKNHRHEPVCLLLHGNPGCGKSLVTTIIARGLTQEAQVYSLPPDPKYFDGYDQQQVVILDDLGQNPDGKDLSTFCQMVSTTDFIVPMASLEDKGKSFTSQYVLASTNLDTLSPPTVTIPEAIKRRFFLDADLITTSKFRNTTGLLDVAKALQPCTGCPKPAHYKTCCPLLCGKAVVVQDRKTKANFSVNTIVEQLRHENATRKKVKHNLDAIFQGLGDSETPGFIVDLLSSSKDPKVIEYCAEQGWIGKANSTIERDFNYVHYMLNCLGSLIIILGTVYALYKLMCMTQGPYTGLPNPQTKRPELRKATLQGPEHEFVRALIKRNCHVITTSKGEFNMLGIHDNCAVVPTHAECGDSVTIDGREVRVLKQCILTDTNDTDTEITLLWLDQNEKFRDIRRFIPEHQREWSNMHLATNVTKFPMLDVEVGTVIPYGEVNLSGNPTCRLLKYNYPTKPGQCGGVIANTGNIVAIHVGGNGRVGYGAALLRKYFAQSQGEITAKHDVREKGLPQINTPNKTKLQPSVFYDVFPGVKEPAALSNGDPRLEVDLSTSVLSKYKGNTQVEWNDNIQIAVDHYSAQLYMLDINPQPLTMEQAVYGIEHLEPLDLTTSAGFPYVTMGIKKKDIVNKVTKDVTKLQEMIDKYGIDLPYVTYLKDELRAPEKIKKGKTRAIEAASINDTTHFRMVFGNLFSVFHANPGVLTGSAVGCNPDVFWSQMYACMDGELLAFDYTNYDGSLHPIWFKALGKVLDNLGFPGHLVNRLCNTTHIFKNLIYTVEGGMPSGICGTSIFNTMINNIIIRVLVLETYKNIDLDKLKIIAYGDDVVVSYPFELDPMEIANKAVRYGLTITPPDKGSTFHKIDWTNVTFLKRHFKPDTKYKFLIHPVYKMEDIYESIRWTKDPKNTQDHVHSLCLLAWHNGEEVYEKFREKIRSTSVGKVLYTPPYSLLYRQWIDQFI</sequence>